<name>LPTF_ECOLI</name>
<evidence type="ECO:0000255" key="1"/>
<evidence type="ECO:0000269" key="2">
    <source>
    </source>
</evidence>
<evidence type="ECO:0000269" key="3">
    <source>
    </source>
</evidence>
<evidence type="ECO:0000305" key="4"/>
<dbReference type="EMBL" id="U14003">
    <property type="protein sequence ID" value="AAA97158.1"/>
    <property type="molecule type" value="Genomic_DNA"/>
</dbReference>
<dbReference type="EMBL" id="U00096">
    <property type="protein sequence ID" value="AAC77218.1"/>
    <property type="molecule type" value="Genomic_DNA"/>
</dbReference>
<dbReference type="EMBL" id="AP009048">
    <property type="protein sequence ID" value="BAE78258.1"/>
    <property type="molecule type" value="Genomic_DNA"/>
</dbReference>
<dbReference type="PIR" id="S56487">
    <property type="entry name" value="S56487"/>
</dbReference>
<dbReference type="RefSeq" id="NP_418682.1">
    <property type="nucleotide sequence ID" value="NC_000913.3"/>
</dbReference>
<dbReference type="RefSeq" id="WP_000584114.1">
    <property type="nucleotide sequence ID" value="NZ_STEB01000013.1"/>
</dbReference>
<dbReference type="PDB" id="6MHU">
    <property type="method" value="EM"/>
    <property type="resolution" value="4.00 A"/>
    <property type="chains" value="F=1-366"/>
</dbReference>
<dbReference type="PDB" id="6MHZ">
    <property type="method" value="EM"/>
    <property type="resolution" value="4.10 A"/>
    <property type="chains" value="F=1-366"/>
</dbReference>
<dbReference type="PDB" id="6MI7">
    <property type="method" value="EM"/>
    <property type="resolution" value="4.20 A"/>
    <property type="chains" value="F=1-366"/>
</dbReference>
<dbReference type="PDB" id="6MI8">
    <property type="method" value="EM"/>
    <property type="resolution" value="4.30 A"/>
    <property type="chains" value="F=1-366"/>
</dbReference>
<dbReference type="PDBsum" id="6MHU"/>
<dbReference type="PDBsum" id="6MHZ"/>
<dbReference type="PDBsum" id="6MI7"/>
<dbReference type="PDBsum" id="6MI8"/>
<dbReference type="EMDB" id="EMD-9118"/>
<dbReference type="EMDB" id="EMD-9124"/>
<dbReference type="EMDB" id="EMD-9125"/>
<dbReference type="EMDB" id="EMD-9126"/>
<dbReference type="SMR" id="P0AF98"/>
<dbReference type="BioGRID" id="4262727">
    <property type="interactions" value="260"/>
</dbReference>
<dbReference type="ComplexPortal" id="CPX-3861">
    <property type="entry name" value="lptBFG LPS ABC transporter complex"/>
</dbReference>
<dbReference type="FunCoup" id="P0AF98">
    <property type="interactions" value="299"/>
</dbReference>
<dbReference type="IntAct" id="P0AF98">
    <property type="interactions" value="1"/>
</dbReference>
<dbReference type="MINT" id="P0AF98"/>
<dbReference type="STRING" id="511145.b4261"/>
<dbReference type="TCDB" id="1.B.42.1.2">
    <property type="family name" value="the outer membrane lipopolysaccharide export porin (lps-ep) family"/>
</dbReference>
<dbReference type="jPOST" id="P0AF98"/>
<dbReference type="PaxDb" id="511145-b4261"/>
<dbReference type="DNASU" id="948795"/>
<dbReference type="EnsemblBacteria" id="AAC77218">
    <property type="protein sequence ID" value="AAC77218"/>
    <property type="gene ID" value="b4261"/>
</dbReference>
<dbReference type="GeneID" id="75203518"/>
<dbReference type="GeneID" id="948795"/>
<dbReference type="KEGG" id="ecj:JW4218"/>
<dbReference type="KEGG" id="eco:b4261"/>
<dbReference type="KEGG" id="ecoc:C3026_22985"/>
<dbReference type="PATRIC" id="fig|511145.12.peg.4392"/>
<dbReference type="EchoBASE" id="EB2424"/>
<dbReference type="eggNOG" id="COG0795">
    <property type="taxonomic scope" value="Bacteria"/>
</dbReference>
<dbReference type="HOGENOM" id="CLU_028799_0_2_6"/>
<dbReference type="InParanoid" id="P0AF98"/>
<dbReference type="OMA" id="NYISSMI"/>
<dbReference type="OrthoDB" id="9778062at2"/>
<dbReference type="PhylomeDB" id="P0AF98"/>
<dbReference type="BioCyc" id="EcoCyc:G7888-MONOMER"/>
<dbReference type="BioCyc" id="MetaCyc:G7888-MONOMER"/>
<dbReference type="PRO" id="PR:P0AF98"/>
<dbReference type="Proteomes" id="UP000000625">
    <property type="component" value="Chromosome"/>
</dbReference>
<dbReference type="GO" id="GO:0043190">
    <property type="term" value="C:ATP-binding cassette (ABC) transporter complex"/>
    <property type="evidence" value="ECO:0000314"/>
    <property type="project" value="EcoCyc"/>
</dbReference>
<dbReference type="GO" id="GO:0016020">
    <property type="term" value="C:membrane"/>
    <property type="evidence" value="ECO:0000314"/>
    <property type="project" value="EcoCyc"/>
</dbReference>
<dbReference type="GO" id="GO:0005886">
    <property type="term" value="C:plasma membrane"/>
    <property type="evidence" value="ECO:0000314"/>
    <property type="project" value="EcoCyc"/>
</dbReference>
<dbReference type="GO" id="GO:1990351">
    <property type="term" value="C:transporter complex"/>
    <property type="evidence" value="ECO:0000314"/>
    <property type="project" value="EcoCyc"/>
</dbReference>
<dbReference type="GO" id="GO:0043165">
    <property type="term" value="P:Gram-negative-bacterium-type cell outer membrane assembly"/>
    <property type="evidence" value="ECO:0000314"/>
    <property type="project" value="ComplexPortal"/>
</dbReference>
<dbReference type="GO" id="GO:0015920">
    <property type="term" value="P:lipopolysaccharide transport"/>
    <property type="evidence" value="ECO:0000314"/>
    <property type="project" value="ComplexPortal"/>
</dbReference>
<dbReference type="GO" id="GO:0055085">
    <property type="term" value="P:transmembrane transport"/>
    <property type="evidence" value="ECO:0007669"/>
    <property type="project" value="InterPro"/>
</dbReference>
<dbReference type="InterPro" id="IPR030922">
    <property type="entry name" value="LptF"/>
</dbReference>
<dbReference type="InterPro" id="IPR005495">
    <property type="entry name" value="LptG/LptF_permease"/>
</dbReference>
<dbReference type="NCBIfam" id="TIGR04407">
    <property type="entry name" value="LptF_YjgP"/>
    <property type="match status" value="1"/>
</dbReference>
<dbReference type="PANTHER" id="PTHR33529:SF7">
    <property type="entry name" value="LIPOPOLYSACCHARIDE EXPORT SYSTEM PERMEASE PROTEIN LPTF"/>
    <property type="match status" value="1"/>
</dbReference>
<dbReference type="PANTHER" id="PTHR33529">
    <property type="entry name" value="SLR0882 PROTEIN-RELATED"/>
    <property type="match status" value="1"/>
</dbReference>
<dbReference type="Pfam" id="PF03739">
    <property type="entry name" value="LptF_LptG"/>
    <property type="match status" value="1"/>
</dbReference>
<comment type="function">
    <text evidence="2">Part of the ABC transporter complex LptBFG involved in the translocation of lipopolysaccharide (LPS) from the inner membrane to the outer membrane.</text>
</comment>
<comment type="subunit">
    <text evidence="3">Component of the lipopolysaccharide transport and assembly complex. The LptBFG transporter is composed of two ATP-binding proteins (LptB) and two transmembrane proteins (LptF and LptG).</text>
</comment>
<comment type="subcellular location">
    <subcellularLocation>
        <location>Cell inner membrane</location>
        <topology>Multi-pass membrane protein</topology>
    </subcellularLocation>
</comment>
<comment type="similarity">
    <text evidence="4">Belongs to the LptF/LptG family.</text>
</comment>
<reference key="1">
    <citation type="journal article" date="1995" name="Nucleic Acids Res.">
        <title>Analysis of the Escherichia coli genome VI: DNA sequence of the region from 92.8 through 100 minutes.</title>
        <authorList>
            <person name="Burland V.D."/>
            <person name="Plunkett G. III"/>
            <person name="Sofia H.J."/>
            <person name="Daniels D.L."/>
            <person name="Blattner F.R."/>
        </authorList>
    </citation>
    <scope>NUCLEOTIDE SEQUENCE [LARGE SCALE GENOMIC DNA]</scope>
    <source>
        <strain>K12 / MG1655 / ATCC 47076</strain>
    </source>
</reference>
<reference key="2">
    <citation type="journal article" date="1997" name="Science">
        <title>The complete genome sequence of Escherichia coli K-12.</title>
        <authorList>
            <person name="Blattner F.R."/>
            <person name="Plunkett G. III"/>
            <person name="Bloch C.A."/>
            <person name="Perna N.T."/>
            <person name="Burland V."/>
            <person name="Riley M."/>
            <person name="Collado-Vides J."/>
            <person name="Glasner J.D."/>
            <person name="Rode C.K."/>
            <person name="Mayhew G.F."/>
            <person name="Gregor J."/>
            <person name="Davis N.W."/>
            <person name="Kirkpatrick H.A."/>
            <person name="Goeden M.A."/>
            <person name="Rose D.J."/>
            <person name="Mau B."/>
            <person name="Shao Y."/>
        </authorList>
    </citation>
    <scope>NUCLEOTIDE SEQUENCE [LARGE SCALE GENOMIC DNA]</scope>
    <source>
        <strain>K12 / MG1655 / ATCC 47076</strain>
    </source>
</reference>
<reference key="3">
    <citation type="journal article" date="2006" name="Mol. Syst. Biol.">
        <title>Highly accurate genome sequences of Escherichia coli K-12 strains MG1655 and W3110.</title>
        <authorList>
            <person name="Hayashi K."/>
            <person name="Morooka N."/>
            <person name="Yamamoto Y."/>
            <person name="Fujita K."/>
            <person name="Isono K."/>
            <person name="Choi S."/>
            <person name="Ohtsubo E."/>
            <person name="Baba T."/>
            <person name="Wanner B.L."/>
            <person name="Mori H."/>
            <person name="Horiuchi T."/>
        </authorList>
    </citation>
    <scope>NUCLEOTIDE SEQUENCE [LARGE SCALE GENOMIC DNA]</scope>
    <source>
        <strain>K12 / W3110 / ATCC 27325 / DSM 5911</strain>
    </source>
</reference>
<reference key="4">
    <citation type="journal article" date="2005" name="Science">
        <title>Global topology analysis of the Escherichia coli inner membrane proteome.</title>
        <authorList>
            <person name="Daley D.O."/>
            <person name="Rapp M."/>
            <person name="Granseth E."/>
            <person name="Melen K."/>
            <person name="Drew D."/>
            <person name="von Heijne G."/>
        </authorList>
    </citation>
    <scope>TOPOLOGY [LARGE SCALE ANALYSIS]</scope>
    <source>
        <strain>K12 / MG1655 / ATCC 47076</strain>
    </source>
</reference>
<reference key="5">
    <citation type="journal article" date="2008" name="Proc. Natl. Acad. Sci. U.S.A.">
        <title>Identification of two inner-membrane proteins required for the transport of lipopolysaccharide to the outer membrane of Escherichia coli.</title>
        <authorList>
            <person name="Ruiz N."/>
            <person name="Gronenberg L.S."/>
            <person name="Kahne D."/>
            <person name="Silhavy T.J."/>
        </authorList>
    </citation>
    <scope>FUNCTION IN LIPOPOLYSACCHARIDE TRANSPORT</scope>
    <source>
        <strain>K12 / MC4100 / ATCC 35695 / DSM 6574</strain>
    </source>
</reference>
<reference key="6">
    <citation type="journal article" date="2009" name="FEBS Lett.">
        <title>Biochemical characterization of an ABC transporter LptBFGC complex required for the outer membrane sorting of lipopolysaccharides.</title>
        <authorList>
            <person name="Narita S."/>
            <person name="Tokuda H."/>
        </authorList>
    </citation>
    <scope>SUBUNIT</scope>
    <scope>INTERACTION WITH LPTB AND LPTG</scope>
</reference>
<gene>
    <name type="primary">lptF</name>
    <name type="synonym">yjgP</name>
    <name type="ordered locus">b4261</name>
    <name type="ordered locus">JW4218</name>
</gene>
<proteinExistence type="evidence at protein level"/>
<accession>P0AF98</accession>
<accession>P39340</accession>
<accession>Q2M648</accession>
<protein>
    <recommendedName>
        <fullName>Lipopolysaccharide export system permease protein LptF</fullName>
    </recommendedName>
</protein>
<keyword id="KW-0002">3D-structure</keyword>
<keyword id="KW-0997">Cell inner membrane</keyword>
<keyword id="KW-1003">Cell membrane</keyword>
<keyword id="KW-0472">Membrane</keyword>
<keyword id="KW-1185">Reference proteome</keyword>
<keyword id="KW-0812">Transmembrane</keyword>
<keyword id="KW-1133">Transmembrane helix</keyword>
<keyword id="KW-0813">Transport</keyword>
<organism>
    <name type="scientific">Escherichia coli (strain K12)</name>
    <dbReference type="NCBI Taxonomy" id="83333"/>
    <lineage>
        <taxon>Bacteria</taxon>
        <taxon>Pseudomonadati</taxon>
        <taxon>Pseudomonadota</taxon>
        <taxon>Gammaproteobacteria</taxon>
        <taxon>Enterobacterales</taxon>
        <taxon>Enterobacteriaceae</taxon>
        <taxon>Escherichia</taxon>
    </lineage>
</organism>
<feature type="chain" id="PRO_0000169771" description="Lipopolysaccharide export system permease protein LptF">
    <location>
        <begin position="1"/>
        <end position="366"/>
    </location>
</feature>
<feature type="topological domain" description="Cytoplasmic" evidence="1">
    <location>
        <begin position="1"/>
        <end position="15"/>
    </location>
</feature>
<feature type="transmembrane region" description="Helical" evidence="1">
    <location>
        <begin position="16"/>
        <end position="36"/>
    </location>
</feature>
<feature type="topological domain" description="Periplasmic" evidence="1">
    <location>
        <begin position="37"/>
        <end position="53"/>
    </location>
</feature>
<feature type="transmembrane region" description="Helical" evidence="1">
    <location>
        <begin position="54"/>
        <end position="74"/>
    </location>
</feature>
<feature type="topological domain" description="Cytoplasmic" evidence="1">
    <location>
        <begin position="75"/>
        <end position="100"/>
    </location>
</feature>
<feature type="transmembrane region" description="Helical" evidence="1">
    <location>
        <begin position="101"/>
        <end position="121"/>
    </location>
</feature>
<feature type="topological domain" description="Periplasmic" evidence="1">
    <location>
        <begin position="122"/>
        <end position="269"/>
    </location>
</feature>
<feature type="transmembrane region" description="Helical" evidence="1">
    <location>
        <begin position="270"/>
        <end position="290"/>
    </location>
</feature>
<feature type="topological domain" description="Cytoplasmic" evidence="1">
    <location>
        <begin position="291"/>
        <end position="295"/>
    </location>
</feature>
<feature type="transmembrane region" description="Helical" evidence="1">
    <location>
        <begin position="296"/>
        <end position="316"/>
    </location>
</feature>
<feature type="topological domain" description="Periplasmic" evidence="1">
    <location>
        <begin position="317"/>
        <end position="327"/>
    </location>
</feature>
<feature type="transmembrane region" description="Helical" evidence="1">
    <location>
        <begin position="328"/>
        <end position="348"/>
    </location>
</feature>
<feature type="topological domain" description="Cytoplasmic" evidence="1">
    <location>
        <begin position="349"/>
        <end position="366"/>
    </location>
</feature>
<sequence>MIIIRYLVRETLKSQLAILFILLLIFFCQKLVRILGAAVDGDIPANLVLSLLGLGVPEMAQLILPLSLFLGLLMTLGKLYTESEITVMHACGLSKAVLVKAAMILAVFTAIVAAVNVMWAGPWSSRHQDEVLAEAKANPGMAALAQGQFQQATNGSSVLFIESVDGSDFKDVFLAQIRPKGNARPSVVVADSGHLTQLRDGSQVVTLNQGTRFEGTALLRDFRITDFQDYQAIIGHQAVALDPNDTDQMDMRTLWNTDTDRARAELNWRITLVFTVFMMALMVVPLSVVNPRQGRVLSMLPAMLLYLLFFLIQTSLKSNGGKGKLDPTLWMWTVNLIYLALAIVLNLWDTVPVRRLRASFSRKGAV</sequence>